<dbReference type="EMBL" id="FM177140">
    <property type="protein sequence ID" value="CAQ66121.1"/>
    <property type="molecule type" value="Genomic_DNA"/>
</dbReference>
<dbReference type="SMR" id="B3WCM0"/>
<dbReference type="KEGG" id="lcb:LCABL_10350"/>
<dbReference type="HOGENOM" id="CLU_030805_9_3_9"/>
<dbReference type="CDD" id="cd00885">
    <property type="entry name" value="cinA"/>
    <property type="match status" value="1"/>
</dbReference>
<dbReference type="Gene3D" id="3.30.70.2860">
    <property type="match status" value="1"/>
</dbReference>
<dbReference type="Gene3D" id="3.90.950.20">
    <property type="entry name" value="CinA-like"/>
    <property type="match status" value="1"/>
</dbReference>
<dbReference type="Gene3D" id="3.40.980.10">
    <property type="entry name" value="MoaB/Mog-like domain"/>
    <property type="match status" value="1"/>
</dbReference>
<dbReference type="HAMAP" id="MF_00226_B">
    <property type="entry name" value="CinA_B"/>
    <property type="match status" value="1"/>
</dbReference>
<dbReference type="InterPro" id="IPR050101">
    <property type="entry name" value="CinA"/>
</dbReference>
<dbReference type="InterPro" id="IPR036653">
    <property type="entry name" value="CinA-like_C"/>
</dbReference>
<dbReference type="InterPro" id="IPR008136">
    <property type="entry name" value="CinA_C"/>
</dbReference>
<dbReference type="InterPro" id="IPR041424">
    <property type="entry name" value="CinA_KH"/>
</dbReference>
<dbReference type="InterPro" id="IPR008135">
    <property type="entry name" value="Competence-induced_CinA"/>
</dbReference>
<dbReference type="InterPro" id="IPR036425">
    <property type="entry name" value="MoaB/Mog-like_dom_sf"/>
</dbReference>
<dbReference type="InterPro" id="IPR001453">
    <property type="entry name" value="MoaB/Mog_dom"/>
</dbReference>
<dbReference type="NCBIfam" id="TIGR00200">
    <property type="entry name" value="cinA_nterm"/>
    <property type="match status" value="1"/>
</dbReference>
<dbReference type="NCBIfam" id="TIGR00177">
    <property type="entry name" value="molyb_syn"/>
    <property type="match status" value="1"/>
</dbReference>
<dbReference type="NCBIfam" id="TIGR00199">
    <property type="entry name" value="PncC_domain"/>
    <property type="match status" value="1"/>
</dbReference>
<dbReference type="NCBIfam" id="NF001813">
    <property type="entry name" value="PRK00549.1"/>
    <property type="match status" value="1"/>
</dbReference>
<dbReference type="PANTHER" id="PTHR13939">
    <property type="entry name" value="NICOTINAMIDE-NUCLEOTIDE AMIDOHYDROLASE PNCC"/>
    <property type="match status" value="1"/>
</dbReference>
<dbReference type="PANTHER" id="PTHR13939:SF0">
    <property type="entry name" value="NMN AMIDOHYDROLASE-LIKE PROTEIN YFAY"/>
    <property type="match status" value="1"/>
</dbReference>
<dbReference type="Pfam" id="PF02464">
    <property type="entry name" value="CinA"/>
    <property type="match status" value="1"/>
</dbReference>
<dbReference type="Pfam" id="PF18146">
    <property type="entry name" value="CinA_KH"/>
    <property type="match status" value="1"/>
</dbReference>
<dbReference type="Pfam" id="PF00994">
    <property type="entry name" value="MoCF_biosynth"/>
    <property type="match status" value="1"/>
</dbReference>
<dbReference type="PIRSF" id="PIRSF006728">
    <property type="entry name" value="CinA"/>
    <property type="match status" value="1"/>
</dbReference>
<dbReference type="SMART" id="SM00852">
    <property type="entry name" value="MoCF_biosynth"/>
    <property type="match status" value="1"/>
</dbReference>
<dbReference type="SUPFAM" id="SSF142433">
    <property type="entry name" value="CinA-like"/>
    <property type="match status" value="1"/>
</dbReference>
<dbReference type="SUPFAM" id="SSF53218">
    <property type="entry name" value="Molybdenum cofactor biosynthesis proteins"/>
    <property type="match status" value="1"/>
</dbReference>
<feature type="chain" id="PRO_1000100322" description="Putative competence-damage inducible protein">
    <location>
        <begin position="1"/>
        <end position="413"/>
    </location>
</feature>
<protein>
    <recommendedName>
        <fullName evidence="1">Putative competence-damage inducible protein</fullName>
    </recommendedName>
</protein>
<reference key="1">
    <citation type="submission" date="2008-06" db="EMBL/GenBank/DDBJ databases">
        <title>Lactobacillus casei BL23 complete genome sequence.</title>
        <authorList>
            <person name="Maze A."/>
            <person name="Boel G."/>
            <person name="Bourand A."/>
            <person name="Loux V."/>
            <person name="Gibrat J.F."/>
            <person name="Zuniga M."/>
            <person name="Hartke A."/>
            <person name="Deutscher J."/>
        </authorList>
    </citation>
    <scope>NUCLEOTIDE SEQUENCE [LARGE SCALE GENOMIC DNA]</scope>
    <source>
        <strain>BL23</strain>
    </source>
</reference>
<gene>
    <name evidence="1" type="primary">cinA</name>
    <name type="ordered locus">LCABL_10350</name>
</gene>
<accession>B3WCM0</accession>
<name>CINA_LACCB</name>
<organism>
    <name type="scientific">Lacticaseibacillus casei (strain BL23)</name>
    <name type="common">Lactobacillus casei</name>
    <dbReference type="NCBI Taxonomy" id="543734"/>
    <lineage>
        <taxon>Bacteria</taxon>
        <taxon>Bacillati</taxon>
        <taxon>Bacillota</taxon>
        <taxon>Bacilli</taxon>
        <taxon>Lactobacillales</taxon>
        <taxon>Lactobacillaceae</taxon>
        <taxon>Lacticaseibacillus</taxon>
    </lineage>
</organism>
<sequence>MQAEIIAVGTEILMGQITNTNGAYMAKQLTALGIDSYHQQVVGDNGPRLEEAIKLAESRSNLVILIGGLGPTPDDLTKQTLAAHLNRKLVEDPDAMAKLQARVKQQQRPMTPNNQLQAMYPEGADILVNRVGLAVGAWIVNGQHTYVLLPGPPKEFVPMVDHELLPRLAKWSGHAEIMVSRVLRFFGIGESQLVTDLDDLIANQTDPTIATYIKDHEVTVRVTASGATEKDADAKLEPMIGAIMDRDGQYFYGYGDDNSLAKELVKTLAANDMQITAAESLTAGAFQAALGDVPGVSTYFKGGFVTYSLATKAAFLAIDARELAAHGVVSAFTAKAMAEHARRKAAADISVSFTGVAGPDTLEGQPAGTVWIGLARRGQLPEAHVYHFPGGRNDVRQRAVMTGMMLALRALQA</sequence>
<proteinExistence type="inferred from homology"/>
<evidence type="ECO:0000255" key="1">
    <source>
        <dbReference type="HAMAP-Rule" id="MF_00226"/>
    </source>
</evidence>
<comment type="similarity">
    <text evidence="1">Belongs to the CinA family.</text>
</comment>